<sequence>MGGMQVQITNLTEWLADQGVRQDVLTTGIPGIPRTLQLRDRLTVHSVRFMTLPFKSSQTGTVFLDQSWFMGAVKWIVLNGKKNNYDAIHVHASGVVWPLLAGMFAQKYLKKPLILTIHCSRIFTYKPMNKWDQFVHDFVKSVELKSIKLSHKAVVLTDKRLDSYNRLLEDSSKMTAISDCIGSNHLSHSIDCPFCSRLKTELLGKKTVLFLGRIAHEKGWSTFVSVAKELADKIGDLQFIVCGDGPQREAMEEQIKAANLQNQFRITGFISHKFVSCYLHHAQLFLLPSHHEEFGGSLIEAAIAGVPIISTNNGGPADIFTHGETAILKDPGDVSGIADEAYKILTNDSVAESLRLHSRPEVVSKFLPHCVYPNYLNLYSSKEAAVHEG</sequence>
<organism>
    <name type="scientific">Niallia circulans</name>
    <name type="common">Bacillus circulans</name>
    <dbReference type="NCBI Taxonomy" id="1397"/>
    <lineage>
        <taxon>Bacteria</taxon>
        <taxon>Bacillati</taxon>
        <taxon>Bacillota</taxon>
        <taxon>Bacilli</taxon>
        <taxon>Bacillales</taxon>
        <taxon>Bacillaceae</taxon>
        <taxon>Niallia</taxon>
    </lineage>
</organism>
<gene>
    <name type="primary">btrM</name>
</gene>
<protein>
    <recommendedName>
        <fullName>2-deoxystreptamine N-acetyl-D-glucosaminyltransferase</fullName>
        <ecNumber>2.4.1.283</ecNumber>
    </recommendedName>
    <alternativeName>
        <fullName>Butirosin biosynthesis protein M</fullName>
    </alternativeName>
</protein>
<keyword id="KW-0045">Antibiotic biosynthesis</keyword>
<keyword id="KW-0328">Glycosyltransferase</keyword>
<keyword id="KW-0808">Transferase</keyword>
<accession>Q4H4F8</accession>
<dbReference type="EC" id="2.4.1.283"/>
<dbReference type="EMBL" id="AB097196">
    <property type="protein sequence ID" value="BAE07063.1"/>
    <property type="molecule type" value="Genomic_DNA"/>
</dbReference>
<dbReference type="SMR" id="Q4H4F8"/>
<dbReference type="KEGG" id="ag:BAE07063"/>
<dbReference type="BioCyc" id="MetaCyc:MONOMER-17233"/>
<dbReference type="UniPathway" id="UPA00964"/>
<dbReference type="GO" id="GO:0102319">
    <property type="term" value="F:2-deoxystreptamine N-acetyl-D-glucosaminyltransferase activity"/>
    <property type="evidence" value="ECO:0007669"/>
    <property type="project" value="UniProtKB-EC"/>
</dbReference>
<dbReference type="GO" id="GO:0017000">
    <property type="term" value="P:antibiotic biosynthetic process"/>
    <property type="evidence" value="ECO:0007669"/>
    <property type="project" value="UniProtKB-KW"/>
</dbReference>
<dbReference type="Gene3D" id="3.40.50.2000">
    <property type="entry name" value="Glycogen Phosphorylase B"/>
    <property type="match status" value="2"/>
</dbReference>
<dbReference type="InterPro" id="IPR001296">
    <property type="entry name" value="Glyco_trans_1"/>
</dbReference>
<dbReference type="InterPro" id="IPR028098">
    <property type="entry name" value="Glyco_trans_4-like_N"/>
</dbReference>
<dbReference type="InterPro" id="IPR050194">
    <property type="entry name" value="Glycosyltransferase_grp1"/>
</dbReference>
<dbReference type="PANTHER" id="PTHR45947">
    <property type="entry name" value="SULFOQUINOVOSYL TRANSFERASE SQD2"/>
    <property type="match status" value="1"/>
</dbReference>
<dbReference type="PANTHER" id="PTHR45947:SF3">
    <property type="entry name" value="SULFOQUINOVOSYL TRANSFERASE SQD2"/>
    <property type="match status" value="1"/>
</dbReference>
<dbReference type="Pfam" id="PF13439">
    <property type="entry name" value="Glyco_transf_4"/>
    <property type="match status" value="1"/>
</dbReference>
<dbReference type="Pfam" id="PF00534">
    <property type="entry name" value="Glycos_transf_1"/>
    <property type="match status" value="1"/>
</dbReference>
<dbReference type="SUPFAM" id="SSF53756">
    <property type="entry name" value="UDP-Glycosyltransferase/glycogen phosphorylase"/>
    <property type="match status" value="1"/>
</dbReference>
<proteinExistence type="inferred from homology"/>
<name>BTRM_NIACI</name>
<feature type="chain" id="PRO_0000421741" description="2-deoxystreptamine N-acetyl-D-glucosaminyltransferase">
    <location>
        <begin position="1"/>
        <end position="389"/>
    </location>
</feature>
<comment type="function">
    <text evidence="3">Glycosyltransferase involved in the biosynthesis of butirosin by mediating conversion of 2-deoxystreptamine (2-DOS) to 2'-N-acetylparomamine using UDP-alpha-D-glucosamine as sugar donor.</text>
</comment>
<comment type="catalytic activity">
    <reaction>
        <text>2-deoxystreptamine + UDP-N-acetyl-alpha-D-glucosamine = 2'-N-acetylparomamine + UDP + H(+)</text>
        <dbReference type="Rhea" id="RHEA:33947"/>
        <dbReference type="ChEBI" id="CHEBI:15378"/>
        <dbReference type="ChEBI" id="CHEBI:57705"/>
        <dbReference type="ChEBI" id="CHEBI:58223"/>
        <dbReference type="ChEBI" id="CHEBI:65010"/>
        <dbReference type="ChEBI" id="CHEBI:65069"/>
        <dbReference type="EC" id="2.4.1.283"/>
    </reaction>
</comment>
<comment type="pathway">
    <text evidence="1">Antibiotic biosynthesis; butirosin biosynthesis.</text>
</comment>
<comment type="miscellaneous">
    <text>In contrast to KanF enzyme in S.kanamyceticus, can only accept UDP-N-acetyl-alpha-D-glucosamine and not UDP-alpha-D-glucose.</text>
</comment>
<comment type="similarity">
    <text evidence="2">Belongs to the glycosyltransferase group 1 family.</text>
</comment>
<reference key="1">
    <citation type="journal article" date="2005" name="J. Antibiot.">
        <title>Extended sequence and functional analysis of the butirosin biosynthetic gene cluster in Bacillus circulans SANK 72073.</title>
        <authorList>
            <person name="Kudo F."/>
            <person name="Numakura M."/>
            <person name="Tamegai H."/>
            <person name="Yamamoto H."/>
            <person name="Eguchi T."/>
            <person name="Kakinuma K."/>
        </authorList>
    </citation>
    <scope>NUCLEOTIDE SEQUENCE [GENOMIC DNA]</scope>
    <source>
        <strain>ATCC 21557 / NCIMB 12336 / BU-1709-YQW-B6</strain>
    </source>
</reference>
<reference key="2">
    <citation type="journal article" date="2005" name="J. Am. Chem. Soc.">
        <title>A new family of glucose-1-phosphate/glucosamine-1-phosphate nucleotidylyltransferase in the biosynthetic pathways for antibiotics.</title>
        <authorList>
            <person name="Kudo F."/>
            <person name="Kawabe K."/>
            <person name="Kuriki H."/>
            <person name="Eguchi T."/>
            <person name="Kakinuma K."/>
        </authorList>
    </citation>
    <scope>FUNCTION</scope>
    <scope>PATHWAY</scope>
</reference>
<evidence type="ECO:0000269" key="1">
    <source>
    </source>
</evidence>
<evidence type="ECO:0000305" key="2"/>
<evidence type="ECO:0000305" key="3">
    <source>
    </source>
</evidence>